<keyword id="KW-0963">Cytoplasm</keyword>
<keyword id="KW-0238">DNA-binding</keyword>
<keyword id="KW-0678">Repressor</keyword>
<keyword id="KW-0804">Transcription</keyword>
<keyword id="KW-0805">Transcription regulation</keyword>
<organism>
    <name type="scientific">Listeria welshimeri serovar 6b (strain ATCC 35897 / DSM 20650 / CCUG 15529 / CIP 8149 / NCTC 11857 / SLCC 5334 / V8)</name>
    <dbReference type="NCBI Taxonomy" id="386043"/>
    <lineage>
        <taxon>Bacteria</taxon>
        <taxon>Bacillati</taxon>
        <taxon>Bacillota</taxon>
        <taxon>Bacilli</taxon>
        <taxon>Bacillales</taxon>
        <taxon>Listeriaceae</taxon>
        <taxon>Listeria</taxon>
    </lineage>
</organism>
<feature type="chain" id="PRO_1000051540" description="Global transcriptional regulator CodY">
    <location>
        <begin position="1"/>
        <end position="259"/>
    </location>
</feature>
<feature type="DNA-binding region" description="H-T-H motif" evidence="1">
    <location>
        <begin position="203"/>
        <end position="222"/>
    </location>
</feature>
<feature type="region of interest" description="GAF domain" evidence="1">
    <location>
        <begin position="1"/>
        <end position="155"/>
    </location>
</feature>
<evidence type="ECO:0000255" key="1">
    <source>
        <dbReference type="HAMAP-Rule" id="MF_00621"/>
    </source>
</evidence>
<accession>A0AI83</accession>
<protein>
    <recommendedName>
        <fullName evidence="1">Global transcriptional regulator CodY</fullName>
    </recommendedName>
</protein>
<dbReference type="EMBL" id="AM263198">
    <property type="protein sequence ID" value="CAK20715.1"/>
    <property type="molecule type" value="Genomic_DNA"/>
</dbReference>
<dbReference type="RefSeq" id="WP_011702105.1">
    <property type="nucleotide sequence ID" value="NC_008555.1"/>
</dbReference>
<dbReference type="SMR" id="A0AI83"/>
<dbReference type="STRING" id="386043.lwe1297"/>
<dbReference type="GeneID" id="61189174"/>
<dbReference type="KEGG" id="lwe:lwe1297"/>
<dbReference type="eggNOG" id="COG4465">
    <property type="taxonomic scope" value="Bacteria"/>
</dbReference>
<dbReference type="HOGENOM" id="CLU_089581_0_0_9"/>
<dbReference type="OrthoDB" id="2056at2"/>
<dbReference type="Proteomes" id="UP000000779">
    <property type="component" value="Chromosome"/>
</dbReference>
<dbReference type="GO" id="GO:0005737">
    <property type="term" value="C:cytoplasm"/>
    <property type="evidence" value="ECO:0007669"/>
    <property type="project" value="UniProtKB-SubCell"/>
</dbReference>
<dbReference type="GO" id="GO:0003677">
    <property type="term" value="F:DNA binding"/>
    <property type="evidence" value="ECO:0007669"/>
    <property type="project" value="UniProtKB-UniRule"/>
</dbReference>
<dbReference type="GO" id="GO:0003700">
    <property type="term" value="F:DNA-binding transcription factor activity"/>
    <property type="evidence" value="ECO:0007669"/>
    <property type="project" value="InterPro"/>
</dbReference>
<dbReference type="GO" id="GO:0005525">
    <property type="term" value="F:GTP binding"/>
    <property type="evidence" value="ECO:0007669"/>
    <property type="project" value="InterPro"/>
</dbReference>
<dbReference type="GO" id="GO:0045892">
    <property type="term" value="P:negative regulation of DNA-templated transcription"/>
    <property type="evidence" value="ECO:0007669"/>
    <property type="project" value="UniProtKB-UniRule"/>
</dbReference>
<dbReference type="FunFam" id="1.10.10.10:FF:000034">
    <property type="entry name" value="GTP-sensing transcriptional pleiotropic repressor CodY"/>
    <property type="match status" value="1"/>
</dbReference>
<dbReference type="FunFam" id="3.30.450.40:FF:000003">
    <property type="entry name" value="GTP-sensing transcriptional pleiotropic repressor CodY"/>
    <property type="match status" value="1"/>
</dbReference>
<dbReference type="Gene3D" id="3.30.450.40">
    <property type="match status" value="1"/>
</dbReference>
<dbReference type="Gene3D" id="1.10.10.10">
    <property type="entry name" value="Winged helix-like DNA-binding domain superfamily/Winged helix DNA-binding domain"/>
    <property type="match status" value="1"/>
</dbReference>
<dbReference type="HAMAP" id="MF_00621">
    <property type="entry name" value="HTH_type_CodY"/>
    <property type="match status" value="1"/>
</dbReference>
<dbReference type="InterPro" id="IPR014154">
    <property type="entry name" value="CodY"/>
</dbReference>
<dbReference type="InterPro" id="IPR029016">
    <property type="entry name" value="GAF-like_dom_sf"/>
</dbReference>
<dbReference type="InterPro" id="IPR013198">
    <property type="entry name" value="GTP_trans_reg_CodY_C"/>
</dbReference>
<dbReference type="InterPro" id="IPR010312">
    <property type="entry name" value="Transc_reg_CodY_N"/>
</dbReference>
<dbReference type="InterPro" id="IPR036388">
    <property type="entry name" value="WH-like_DNA-bd_sf"/>
</dbReference>
<dbReference type="InterPro" id="IPR036390">
    <property type="entry name" value="WH_DNA-bd_sf"/>
</dbReference>
<dbReference type="NCBIfam" id="TIGR02787">
    <property type="entry name" value="codY_Gpos"/>
    <property type="match status" value="1"/>
</dbReference>
<dbReference type="NCBIfam" id="NF003170">
    <property type="entry name" value="PRK04158.1"/>
    <property type="match status" value="1"/>
</dbReference>
<dbReference type="PANTHER" id="PTHR40062:SF1">
    <property type="entry name" value="GLOBAL TRANSCRIPTIONAL REGULATOR CODY"/>
    <property type="match status" value="1"/>
</dbReference>
<dbReference type="PANTHER" id="PTHR40062">
    <property type="entry name" value="GTP-SENSING TRANSCRIPTIONAL PLEIOTROPIC REPRESSOR CODY"/>
    <property type="match status" value="1"/>
</dbReference>
<dbReference type="Pfam" id="PF06018">
    <property type="entry name" value="CodY"/>
    <property type="match status" value="1"/>
</dbReference>
<dbReference type="Pfam" id="PF08222">
    <property type="entry name" value="HTH_CodY"/>
    <property type="match status" value="1"/>
</dbReference>
<dbReference type="PIRSF" id="PIRSF011572">
    <property type="entry name" value="GTP_sensing_CodY"/>
    <property type="match status" value="1"/>
</dbReference>
<dbReference type="SUPFAM" id="SSF46785">
    <property type="entry name" value="Winged helix' DNA-binding domain"/>
    <property type="match status" value="1"/>
</dbReference>
<comment type="function">
    <text evidence="1">DNA-binding global transcriptional regulator which is involved in the adaptive response to starvation and acts by directly or indirectly controlling the expression of numerous genes in response to nutrient availability. During rapid exponential growth, CodY is highly active and represses genes whose products allow adaptation to nutrient depletion.</text>
</comment>
<comment type="subcellular location">
    <subcellularLocation>
        <location evidence="1">Cytoplasm</location>
    </subcellularLocation>
</comment>
<comment type="similarity">
    <text evidence="1">Belongs to the CodY family.</text>
</comment>
<gene>
    <name evidence="1" type="primary">codY</name>
    <name type="ordered locus">lwe1297</name>
</gene>
<reference key="1">
    <citation type="journal article" date="2006" name="J. Bacteriol.">
        <title>Whole-genome sequence of Listeria welshimeri reveals common steps in genome reduction with Listeria innocua as compared to Listeria monocytogenes.</title>
        <authorList>
            <person name="Hain T."/>
            <person name="Steinweg C."/>
            <person name="Kuenne C.T."/>
            <person name="Billion A."/>
            <person name="Ghai R."/>
            <person name="Chatterjee S.S."/>
            <person name="Domann E."/>
            <person name="Kaerst U."/>
            <person name="Goesmann A."/>
            <person name="Bekel T."/>
            <person name="Bartels D."/>
            <person name="Kaiser O."/>
            <person name="Meyer F."/>
            <person name="Puehler A."/>
            <person name="Weisshaar B."/>
            <person name="Wehland J."/>
            <person name="Liang C."/>
            <person name="Dandekar T."/>
            <person name="Lampidis R."/>
            <person name="Kreft J."/>
            <person name="Goebel W."/>
            <person name="Chakraborty T."/>
        </authorList>
    </citation>
    <scope>NUCLEOTIDE SEQUENCE [LARGE SCALE GENOMIC DNA]</scope>
    <source>
        <strain>ATCC 35897 / DSM 20650 / CCUG 15529 / CIP 8149 / NCTC 11857 / SLCC 5334 / V8</strain>
    </source>
</reference>
<proteinExistence type="inferred from homology"/>
<sequence>MTLLEKTRKINAMLQNAAGKTVNFKEMADTLTDVIEANTYIVSRKGKLLGYSESLPIENDRMKQMLTERQFPEEYTQSLFNVGETSSNLEVSSQYTAFPIENSDLFTKGLTTIVPIVGGGERLGTLILSRLESNFTDDDLLLAEYGGTVVGMEILHEKAEEIEEEARSRAVVQMAISSLSYSELEAIEHIFDELNGKEGLLVASKIADRVGITRSVIVNALRKLESAGVIDSRSLGMKGTFIRVLNDKFLVELEKLKNN</sequence>
<name>CODY_LISW6</name>